<feature type="chain" id="PRO_0000048294" description="Tubulin beta chain">
    <location>
        <begin position="1"/>
        <end position="446"/>
    </location>
</feature>
<feature type="region of interest" description="Disordered" evidence="3">
    <location>
        <begin position="426"/>
        <end position="446"/>
    </location>
</feature>
<feature type="compositionally biased region" description="Acidic residues" evidence="3">
    <location>
        <begin position="429"/>
        <end position="446"/>
    </location>
</feature>
<feature type="binding site" evidence="2">
    <location>
        <position position="11"/>
    </location>
    <ligand>
        <name>GTP</name>
        <dbReference type="ChEBI" id="CHEBI:37565"/>
    </ligand>
</feature>
<feature type="binding site" evidence="1">
    <location>
        <position position="69"/>
    </location>
    <ligand>
        <name>GTP</name>
        <dbReference type="ChEBI" id="CHEBI:37565"/>
    </ligand>
</feature>
<feature type="binding site" evidence="1">
    <location>
        <position position="69"/>
    </location>
    <ligand>
        <name>Mg(2+)</name>
        <dbReference type="ChEBI" id="CHEBI:18420"/>
    </ligand>
</feature>
<feature type="binding site" evidence="2">
    <location>
        <position position="138"/>
    </location>
    <ligand>
        <name>GTP</name>
        <dbReference type="ChEBI" id="CHEBI:37565"/>
    </ligand>
</feature>
<feature type="binding site" evidence="2">
    <location>
        <position position="142"/>
    </location>
    <ligand>
        <name>GTP</name>
        <dbReference type="ChEBI" id="CHEBI:37565"/>
    </ligand>
</feature>
<feature type="binding site" evidence="2">
    <location>
        <position position="143"/>
    </location>
    <ligand>
        <name>GTP</name>
        <dbReference type="ChEBI" id="CHEBI:37565"/>
    </ligand>
</feature>
<feature type="binding site" evidence="2">
    <location>
        <position position="144"/>
    </location>
    <ligand>
        <name>GTP</name>
        <dbReference type="ChEBI" id="CHEBI:37565"/>
    </ligand>
</feature>
<feature type="binding site" evidence="2">
    <location>
        <position position="204"/>
    </location>
    <ligand>
        <name>GTP</name>
        <dbReference type="ChEBI" id="CHEBI:37565"/>
    </ligand>
</feature>
<feature type="binding site" evidence="2">
    <location>
        <position position="226"/>
    </location>
    <ligand>
        <name>GTP</name>
        <dbReference type="ChEBI" id="CHEBI:37565"/>
    </ligand>
</feature>
<name>TBB_EUPCR</name>
<comment type="function">
    <text>Tubulin is the major constituent of microtubules, a cylinder consisting of laterally associated linear protofilaments composed of alpha- and beta-tubulin heterodimers. Microtubules grow by the addition of GTP-tubulin dimers to the microtubule end, where a stabilizing cap forms. Below the cap, tubulin dimers are in GDP-bound state, owing to GTPase activity of alpha-tubulin.</text>
</comment>
<comment type="cofactor">
    <cofactor evidence="1">
        <name>Mg(2+)</name>
        <dbReference type="ChEBI" id="CHEBI:18420"/>
    </cofactor>
</comment>
<comment type="subunit">
    <text>Dimer of alpha and beta chains. A typical microtubule is a hollow water-filled tube with an outer diameter of 25 nm and an inner diameter of 15 nM. Alpha-beta heterodimers associate head-to-tail to form protofilaments running lengthwise along the microtubule wall with the beta-tubulin subunit facing the microtubule plus end conferring a structural polarity. Microtubules usually have 13 protofilaments but different protofilament numbers can be found in some organisms and specialized cells.</text>
</comment>
<comment type="subcellular location">
    <subcellularLocation>
        <location>Cytoplasm</location>
        <location>Cytoskeleton</location>
    </subcellularLocation>
</comment>
<comment type="similarity">
    <text evidence="4">Belongs to the tubulin family.</text>
</comment>
<accession>P20365</accession>
<keyword id="KW-0963">Cytoplasm</keyword>
<keyword id="KW-0206">Cytoskeleton</keyword>
<keyword id="KW-0342">GTP-binding</keyword>
<keyword id="KW-0460">Magnesium</keyword>
<keyword id="KW-0479">Metal-binding</keyword>
<keyword id="KW-0493">Microtubule</keyword>
<keyword id="KW-0547">Nucleotide-binding</keyword>
<dbReference type="EMBL" id="J04534">
    <property type="protein sequence ID" value="AAA29123.1"/>
    <property type="molecule type" value="Genomic_DNA"/>
</dbReference>
<dbReference type="PIR" id="B30309">
    <property type="entry name" value="B30309"/>
</dbReference>
<dbReference type="SMR" id="P20365"/>
<dbReference type="GO" id="GO:0005737">
    <property type="term" value="C:cytoplasm"/>
    <property type="evidence" value="ECO:0007669"/>
    <property type="project" value="UniProtKB-KW"/>
</dbReference>
<dbReference type="GO" id="GO:0005874">
    <property type="term" value="C:microtubule"/>
    <property type="evidence" value="ECO:0007669"/>
    <property type="project" value="UniProtKB-KW"/>
</dbReference>
<dbReference type="GO" id="GO:0005525">
    <property type="term" value="F:GTP binding"/>
    <property type="evidence" value="ECO:0007669"/>
    <property type="project" value="UniProtKB-KW"/>
</dbReference>
<dbReference type="GO" id="GO:0003924">
    <property type="term" value="F:GTPase activity"/>
    <property type="evidence" value="ECO:0007669"/>
    <property type="project" value="InterPro"/>
</dbReference>
<dbReference type="GO" id="GO:0046872">
    <property type="term" value="F:metal ion binding"/>
    <property type="evidence" value="ECO:0007669"/>
    <property type="project" value="UniProtKB-KW"/>
</dbReference>
<dbReference type="GO" id="GO:0005200">
    <property type="term" value="F:structural constituent of cytoskeleton"/>
    <property type="evidence" value="ECO:0007669"/>
    <property type="project" value="InterPro"/>
</dbReference>
<dbReference type="GO" id="GO:0007017">
    <property type="term" value="P:microtubule-based process"/>
    <property type="evidence" value="ECO:0007669"/>
    <property type="project" value="InterPro"/>
</dbReference>
<dbReference type="CDD" id="cd02187">
    <property type="entry name" value="beta_tubulin"/>
    <property type="match status" value="1"/>
</dbReference>
<dbReference type="FunFam" id="1.10.287.600:FF:000002">
    <property type="entry name" value="Tubulin beta chain"/>
    <property type="match status" value="1"/>
</dbReference>
<dbReference type="FunFam" id="3.30.1330.20:FF:000002">
    <property type="entry name" value="Tubulin beta chain"/>
    <property type="match status" value="1"/>
</dbReference>
<dbReference type="FunFam" id="3.40.50.1440:FF:000005">
    <property type="entry name" value="Tubulin beta chain"/>
    <property type="match status" value="1"/>
</dbReference>
<dbReference type="Gene3D" id="1.10.287.600">
    <property type="entry name" value="Helix hairpin bin"/>
    <property type="match status" value="1"/>
</dbReference>
<dbReference type="Gene3D" id="3.30.1330.20">
    <property type="entry name" value="Tubulin/FtsZ, C-terminal domain"/>
    <property type="match status" value="1"/>
</dbReference>
<dbReference type="Gene3D" id="3.40.50.1440">
    <property type="entry name" value="Tubulin/FtsZ, GTPase domain"/>
    <property type="match status" value="1"/>
</dbReference>
<dbReference type="InterPro" id="IPR013838">
    <property type="entry name" value="Beta-tubulin_BS"/>
</dbReference>
<dbReference type="InterPro" id="IPR002453">
    <property type="entry name" value="Beta_tubulin"/>
</dbReference>
<dbReference type="InterPro" id="IPR008280">
    <property type="entry name" value="Tub_FtsZ_C"/>
</dbReference>
<dbReference type="InterPro" id="IPR000217">
    <property type="entry name" value="Tubulin"/>
</dbReference>
<dbReference type="InterPro" id="IPR037103">
    <property type="entry name" value="Tubulin/FtsZ-like_C"/>
</dbReference>
<dbReference type="InterPro" id="IPR018316">
    <property type="entry name" value="Tubulin/FtsZ_2-layer-sand-dom"/>
</dbReference>
<dbReference type="InterPro" id="IPR036525">
    <property type="entry name" value="Tubulin/FtsZ_GTPase_sf"/>
</dbReference>
<dbReference type="InterPro" id="IPR023123">
    <property type="entry name" value="Tubulin_C"/>
</dbReference>
<dbReference type="InterPro" id="IPR017975">
    <property type="entry name" value="Tubulin_CS"/>
</dbReference>
<dbReference type="InterPro" id="IPR003008">
    <property type="entry name" value="Tubulin_FtsZ_GTPase"/>
</dbReference>
<dbReference type="PANTHER" id="PTHR11588">
    <property type="entry name" value="TUBULIN"/>
    <property type="match status" value="1"/>
</dbReference>
<dbReference type="Pfam" id="PF00091">
    <property type="entry name" value="Tubulin"/>
    <property type="match status" value="1"/>
</dbReference>
<dbReference type="Pfam" id="PF03953">
    <property type="entry name" value="Tubulin_C"/>
    <property type="match status" value="1"/>
</dbReference>
<dbReference type="PRINTS" id="PR01163">
    <property type="entry name" value="BETATUBULIN"/>
</dbReference>
<dbReference type="PRINTS" id="PR01161">
    <property type="entry name" value="TUBULIN"/>
</dbReference>
<dbReference type="SMART" id="SM00864">
    <property type="entry name" value="Tubulin"/>
    <property type="match status" value="1"/>
</dbReference>
<dbReference type="SMART" id="SM00865">
    <property type="entry name" value="Tubulin_C"/>
    <property type="match status" value="1"/>
</dbReference>
<dbReference type="SUPFAM" id="SSF55307">
    <property type="entry name" value="Tubulin C-terminal domain-like"/>
    <property type="match status" value="1"/>
</dbReference>
<dbReference type="SUPFAM" id="SSF52490">
    <property type="entry name" value="Tubulin nucleotide-binding domain-like"/>
    <property type="match status" value="1"/>
</dbReference>
<dbReference type="PROSITE" id="PS00227">
    <property type="entry name" value="TUBULIN"/>
    <property type="match status" value="1"/>
</dbReference>
<dbReference type="PROSITE" id="PS00228">
    <property type="entry name" value="TUBULIN_B_AUTOREG"/>
    <property type="match status" value="1"/>
</dbReference>
<proteinExistence type="inferred from homology"/>
<sequence length="446" mass="49925">MREIVHVQGGQCGNQIGAKFWEVISDEHGVDPTGTYHGDSDLQLERINVYYNEATGGRYVPRAVLMDLEPGTMDSVRAGPFGQLFRPDNFVFGQTGAGNNWAKGHYTEGAELIDSVLDVVRKEAEGCDCLQGFQITHSLGGGTGSGMGTLLISKIREEYPDRIMETFSVFPSPKVSDTVVEPYNATLSVHQLVENADEVMVIDNEALYDICFRTLKLTTPTYGDLNHLVSACISGVTSCLRFPGQLNSDLRKLAVNLIPFPRLHFFMVGFAPLTSRGSQQYRALTVPELTQQMFDAKNMMCASDPRHGRYLTASAMFRGRMSTKEVDEQMLNVQNKNSSYFVEWIPNNIKSSVCDIPPKGLKLASTFIGNSTAIQEMFKRVAEQFTAMFRRKAFLHWYTGEGMDEMEFTEAESNMNDLVSEYQQYQDATAEEEGEYVEDEDEMDGM</sequence>
<protein>
    <recommendedName>
        <fullName>Tubulin beta chain</fullName>
    </recommendedName>
    <alternativeName>
        <fullName>Beta-tubulin</fullName>
    </alternativeName>
</protein>
<evidence type="ECO:0000250" key="1">
    <source>
        <dbReference type="UniProtKB" id="P68363"/>
    </source>
</evidence>
<evidence type="ECO:0000250" key="2">
    <source>
        <dbReference type="UniProtKB" id="Q13509"/>
    </source>
</evidence>
<evidence type="ECO:0000256" key="3">
    <source>
        <dbReference type="SAM" id="MobiDB-lite"/>
    </source>
</evidence>
<evidence type="ECO:0000305" key="4"/>
<organism>
    <name type="scientific">Euplotes crassus</name>
    <dbReference type="NCBI Taxonomy" id="5936"/>
    <lineage>
        <taxon>Eukaryota</taxon>
        <taxon>Sar</taxon>
        <taxon>Alveolata</taxon>
        <taxon>Ciliophora</taxon>
        <taxon>Intramacronucleata</taxon>
        <taxon>Spirotrichea</taxon>
        <taxon>Hypotrichia</taxon>
        <taxon>Euplotida</taxon>
        <taxon>Euplotidae</taxon>
        <taxon>Moneuplotes</taxon>
    </lineage>
</organism>
<reference key="1">
    <citation type="journal article" date="1989" name="Proc. Natl. Acad. Sci. U.S.A.">
        <title>Differential use of termination codons in ciliated protozoa.</title>
        <authorList>
            <person name="Harper D.S."/>
            <person name="Jahn C.L."/>
        </authorList>
    </citation>
    <scope>NUCLEOTIDE SEQUENCE [GENOMIC DNA]</scope>
</reference>